<comment type="function">
    <text evidence="1">Catalyzes the decarboxylation of orotidine 5'-monophosphate (OMP) to uridine 5'-monophosphate (UMP).</text>
</comment>
<comment type="catalytic activity">
    <reaction evidence="1">
        <text>orotidine 5'-phosphate + H(+) = UMP + CO2</text>
        <dbReference type="Rhea" id="RHEA:11596"/>
        <dbReference type="ChEBI" id="CHEBI:15378"/>
        <dbReference type="ChEBI" id="CHEBI:16526"/>
        <dbReference type="ChEBI" id="CHEBI:57538"/>
        <dbReference type="ChEBI" id="CHEBI:57865"/>
        <dbReference type="EC" id="4.1.1.23"/>
    </reaction>
</comment>
<comment type="pathway">
    <text evidence="1">Pyrimidine metabolism; UMP biosynthesis via de novo pathway; UMP from orotate: step 2/2.</text>
</comment>
<comment type="subunit">
    <text evidence="1">Homodimer.</text>
</comment>
<comment type="similarity">
    <text evidence="1">Belongs to the OMP decarboxylase family. Type 1 subfamily.</text>
</comment>
<reference key="1">
    <citation type="journal article" date="2009" name="Infect. Immun.">
        <title>Comparative genomics reveal extensive transposon-mediated genomic plasticity and diversity among potential effector proteins within the genus Coxiella.</title>
        <authorList>
            <person name="Beare P.A."/>
            <person name="Unsworth N."/>
            <person name="Andoh M."/>
            <person name="Voth D.E."/>
            <person name="Omsland A."/>
            <person name="Gilk S.D."/>
            <person name="Williams K.P."/>
            <person name="Sobral B.W."/>
            <person name="Kupko J.J. III"/>
            <person name="Porcella S.F."/>
            <person name="Samuel J.E."/>
            <person name="Heinzen R.A."/>
        </authorList>
    </citation>
    <scope>NUCLEOTIDE SEQUENCE [LARGE SCALE GENOMIC DNA]</scope>
    <source>
        <strain>CbuG_Q212</strain>
    </source>
</reference>
<name>PYRF_COXB2</name>
<evidence type="ECO:0000255" key="1">
    <source>
        <dbReference type="HAMAP-Rule" id="MF_01200"/>
    </source>
</evidence>
<dbReference type="EC" id="4.1.1.23" evidence="1"/>
<dbReference type="EMBL" id="CP001019">
    <property type="protein sequence ID" value="ACJ18762.1"/>
    <property type="molecule type" value="Genomic_DNA"/>
</dbReference>
<dbReference type="RefSeq" id="WP_005771152.1">
    <property type="nucleotide sequence ID" value="NC_011527.1"/>
</dbReference>
<dbReference type="SMR" id="B6J1D4"/>
<dbReference type="KEGG" id="cbg:CbuG_1463"/>
<dbReference type="HOGENOM" id="CLU_067069_0_0_6"/>
<dbReference type="UniPathway" id="UPA00070">
    <property type="reaction ID" value="UER00120"/>
</dbReference>
<dbReference type="GO" id="GO:0005829">
    <property type="term" value="C:cytosol"/>
    <property type="evidence" value="ECO:0007669"/>
    <property type="project" value="TreeGrafter"/>
</dbReference>
<dbReference type="GO" id="GO:0004590">
    <property type="term" value="F:orotidine-5'-phosphate decarboxylase activity"/>
    <property type="evidence" value="ECO:0007669"/>
    <property type="project" value="UniProtKB-UniRule"/>
</dbReference>
<dbReference type="GO" id="GO:0006207">
    <property type="term" value="P:'de novo' pyrimidine nucleobase biosynthetic process"/>
    <property type="evidence" value="ECO:0007669"/>
    <property type="project" value="InterPro"/>
</dbReference>
<dbReference type="GO" id="GO:0044205">
    <property type="term" value="P:'de novo' UMP biosynthetic process"/>
    <property type="evidence" value="ECO:0007669"/>
    <property type="project" value="UniProtKB-UniRule"/>
</dbReference>
<dbReference type="CDD" id="cd04725">
    <property type="entry name" value="OMP_decarboxylase_like"/>
    <property type="match status" value="1"/>
</dbReference>
<dbReference type="FunFam" id="3.20.20.70:FF:000015">
    <property type="entry name" value="Orotidine 5'-phosphate decarboxylase"/>
    <property type="match status" value="1"/>
</dbReference>
<dbReference type="Gene3D" id="3.20.20.70">
    <property type="entry name" value="Aldolase class I"/>
    <property type="match status" value="1"/>
</dbReference>
<dbReference type="HAMAP" id="MF_01200_B">
    <property type="entry name" value="OMPdecase_type1_B"/>
    <property type="match status" value="1"/>
</dbReference>
<dbReference type="InterPro" id="IPR013785">
    <property type="entry name" value="Aldolase_TIM"/>
</dbReference>
<dbReference type="InterPro" id="IPR014732">
    <property type="entry name" value="OMPdecase"/>
</dbReference>
<dbReference type="InterPro" id="IPR018089">
    <property type="entry name" value="OMPdecase_AS"/>
</dbReference>
<dbReference type="InterPro" id="IPR047596">
    <property type="entry name" value="OMPdecase_bac"/>
</dbReference>
<dbReference type="InterPro" id="IPR001754">
    <property type="entry name" value="OMPdeCOase_dom"/>
</dbReference>
<dbReference type="InterPro" id="IPR011060">
    <property type="entry name" value="RibuloseP-bd_barrel"/>
</dbReference>
<dbReference type="NCBIfam" id="NF001273">
    <property type="entry name" value="PRK00230.1"/>
    <property type="match status" value="1"/>
</dbReference>
<dbReference type="NCBIfam" id="TIGR01740">
    <property type="entry name" value="pyrF"/>
    <property type="match status" value="1"/>
</dbReference>
<dbReference type="PANTHER" id="PTHR32119">
    <property type="entry name" value="OROTIDINE 5'-PHOSPHATE DECARBOXYLASE"/>
    <property type="match status" value="1"/>
</dbReference>
<dbReference type="PANTHER" id="PTHR32119:SF2">
    <property type="entry name" value="OROTIDINE 5'-PHOSPHATE DECARBOXYLASE"/>
    <property type="match status" value="1"/>
</dbReference>
<dbReference type="Pfam" id="PF00215">
    <property type="entry name" value="OMPdecase"/>
    <property type="match status" value="1"/>
</dbReference>
<dbReference type="SMART" id="SM00934">
    <property type="entry name" value="OMPdecase"/>
    <property type="match status" value="1"/>
</dbReference>
<dbReference type="SUPFAM" id="SSF51366">
    <property type="entry name" value="Ribulose-phoshate binding barrel"/>
    <property type="match status" value="1"/>
</dbReference>
<dbReference type="PROSITE" id="PS00156">
    <property type="entry name" value="OMPDECASE"/>
    <property type="match status" value="1"/>
</dbReference>
<organism>
    <name type="scientific">Coxiella burnetii (strain CbuG_Q212)</name>
    <name type="common">Coxiella burnetii (strain Q212)</name>
    <dbReference type="NCBI Taxonomy" id="434923"/>
    <lineage>
        <taxon>Bacteria</taxon>
        <taxon>Pseudomonadati</taxon>
        <taxon>Pseudomonadota</taxon>
        <taxon>Gammaproteobacteria</taxon>
        <taxon>Legionellales</taxon>
        <taxon>Coxiellaceae</taxon>
        <taxon>Coxiella</taxon>
    </lineage>
</organism>
<gene>
    <name evidence="1" type="primary">pyrF</name>
    <name type="ordered locus">CbuG_1463</name>
</gene>
<protein>
    <recommendedName>
        <fullName evidence="1">Orotidine 5'-phosphate decarboxylase</fullName>
        <ecNumber evidence="1">4.1.1.23</ecNumber>
    </recommendedName>
    <alternativeName>
        <fullName evidence="1">OMP decarboxylase</fullName>
        <shortName evidence="1">OMPDCase</shortName>
        <shortName evidence="1">OMPdecase</shortName>
    </alternativeName>
</protein>
<proteinExistence type="inferred from homology"/>
<feature type="chain" id="PRO_1000138518" description="Orotidine 5'-phosphate decarboxylase">
    <location>
        <begin position="1"/>
        <end position="236"/>
    </location>
</feature>
<feature type="active site" description="Proton donor" evidence="1">
    <location>
        <position position="64"/>
    </location>
</feature>
<feature type="binding site" evidence="1">
    <location>
        <position position="13"/>
    </location>
    <ligand>
        <name>substrate</name>
    </ligand>
</feature>
<feature type="binding site" evidence="1">
    <location>
        <position position="35"/>
    </location>
    <ligand>
        <name>substrate</name>
    </ligand>
</feature>
<feature type="binding site" evidence="1">
    <location>
        <begin position="62"/>
        <end position="71"/>
    </location>
    <ligand>
        <name>substrate</name>
    </ligand>
</feature>
<feature type="binding site" evidence="1">
    <location>
        <position position="123"/>
    </location>
    <ligand>
        <name>substrate</name>
    </ligand>
</feature>
<feature type="binding site" evidence="1">
    <location>
        <position position="184"/>
    </location>
    <ligand>
        <name>substrate</name>
    </ligand>
</feature>
<feature type="binding site" evidence="1">
    <location>
        <position position="193"/>
    </location>
    <ligand>
        <name>substrate</name>
    </ligand>
</feature>
<feature type="binding site" evidence="1">
    <location>
        <position position="213"/>
    </location>
    <ligand>
        <name>substrate</name>
    </ligand>
</feature>
<feature type="binding site" evidence="1">
    <location>
        <position position="214"/>
    </location>
    <ligand>
        <name>substrate</name>
    </ligand>
</feature>
<accession>B6J1D4</accession>
<sequence>MEKPDPKVIVAIDAGTVEQARAQINPLTPELCHLKIGSILFTRYGPAFVEELMQKGYRIFLDLKFYDIPQTVAGACRAVAELGVWMMNIHISGGRTMMETVVNALQSITLKEKPLLIGVTILTSLDGSDLKTLGIQEKVPDIVCRMATLAKSAGLDGVVCSAQEAALLRKQFDRNFLLVTPGIRLETDEKGDQKRVMTPRAAIQAGSDYLVIGRPITQSTDPLKALEAIDKDIKTR</sequence>
<keyword id="KW-0210">Decarboxylase</keyword>
<keyword id="KW-0456">Lyase</keyword>
<keyword id="KW-0665">Pyrimidine biosynthesis</keyword>